<keyword id="KW-0010">Activator</keyword>
<keyword id="KW-0963">Cytoplasm</keyword>
<keyword id="KW-0238">DNA-binding</keyword>
<keyword id="KW-0597">Phosphoprotein</keyword>
<keyword id="KW-0804">Transcription</keyword>
<keyword id="KW-0805">Transcription regulation</keyword>
<keyword id="KW-0902">Two-component regulatory system</keyword>
<keyword id="KW-0843">Virulence</keyword>
<evidence type="ECO:0000250" key="1"/>
<evidence type="ECO:0000255" key="2">
    <source>
        <dbReference type="PROSITE-ProRule" id="PRU00169"/>
    </source>
</evidence>
<evidence type="ECO:0000255" key="3">
    <source>
        <dbReference type="PROSITE-ProRule" id="PRU01091"/>
    </source>
</evidence>
<evidence type="ECO:0000305" key="4"/>
<reference key="1">
    <citation type="journal article" date="2007" name="BMC Microbiol.">
        <title>Subtle genetic changes enhance virulence of methicillin resistant and sensitive Staphylococcus aureus.</title>
        <authorList>
            <person name="Highlander S.K."/>
            <person name="Hulten K.G."/>
            <person name="Qin X."/>
            <person name="Jiang H."/>
            <person name="Yerrapragada S."/>
            <person name="Mason E.O. Jr."/>
            <person name="Shang Y."/>
            <person name="Williams T.M."/>
            <person name="Fortunov R.M."/>
            <person name="Liu Y."/>
            <person name="Igboeli O."/>
            <person name="Petrosino J."/>
            <person name="Tirumalai M."/>
            <person name="Uzman A."/>
            <person name="Fox G.E."/>
            <person name="Cardenas A.M."/>
            <person name="Muzny D.M."/>
            <person name="Hemphill L."/>
            <person name="Ding Y."/>
            <person name="Dugan S."/>
            <person name="Blyth P.R."/>
            <person name="Buhay C.J."/>
            <person name="Dinh H.H."/>
            <person name="Hawes A.C."/>
            <person name="Holder M."/>
            <person name="Kovar C.L."/>
            <person name="Lee S.L."/>
            <person name="Liu W."/>
            <person name="Nazareth L.V."/>
            <person name="Wang Q."/>
            <person name="Zhou J."/>
            <person name="Kaplan S.L."/>
            <person name="Weinstock G.M."/>
        </authorList>
    </citation>
    <scope>NUCLEOTIDE SEQUENCE [LARGE SCALE GENOMIC DNA]</scope>
    <source>
        <strain>USA300 / TCH1516</strain>
    </source>
</reference>
<comment type="function">
    <text evidence="1">Member of the two-component regulatory system HssS/HssR involved in intracellular heme homeostasis and tempering of staphylococcal virulence. Phosphorylated HssR binds to a direct repeat sequence within hrtAB promoter and activates the expression of hrtAB, an efflux pump, in response to extracellular heme, hemin, hemoglobin or blood (By similarity).</text>
</comment>
<comment type="subcellular location">
    <subcellularLocation>
        <location evidence="4">Cytoplasm</location>
    </subcellularLocation>
</comment>
<comment type="PTM">
    <text evidence="1">Phosphorylated by HssS.</text>
</comment>
<organism>
    <name type="scientific">Staphylococcus aureus (strain USA300 / TCH1516)</name>
    <dbReference type="NCBI Taxonomy" id="451516"/>
    <lineage>
        <taxon>Bacteria</taxon>
        <taxon>Bacillati</taxon>
        <taxon>Bacillota</taxon>
        <taxon>Bacilli</taxon>
        <taxon>Bacillales</taxon>
        <taxon>Staphylococcaceae</taxon>
        <taxon>Staphylococcus</taxon>
    </lineage>
</organism>
<dbReference type="EMBL" id="CP000730">
    <property type="protein sequence ID" value="ABX30335.1"/>
    <property type="molecule type" value="Genomic_DNA"/>
</dbReference>
<dbReference type="RefSeq" id="WP_000249497.1">
    <property type="nucleotide sequence ID" value="NC_010079.1"/>
</dbReference>
<dbReference type="SMR" id="A8Z552"/>
<dbReference type="KEGG" id="sax:USA300HOU_2344"/>
<dbReference type="HOGENOM" id="CLU_000445_30_3_9"/>
<dbReference type="GO" id="GO:0005829">
    <property type="term" value="C:cytosol"/>
    <property type="evidence" value="ECO:0007669"/>
    <property type="project" value="TreeGrafter"/>
</dbReference>
<dbReference type="GO" id="GO:0032993">
    <property type="term" value="C:protein-DNA complex"/>
    <property type="evidence" value="ECO:0007669"/>
    <property type="project" value="TreeGrafter"/>
</dbReference>
<dbReference type="GO" id="GO:0000156">
    <property type="term" value="F:phosphorelay response regulator activity"/>
    <property type="evidence" value="ECO:0007669"/>
    <property type="project" value="TreeGrafter"/>
</dbReference>
<dbReference type="GO" id="GO:0000976">
    <property type="term" value="F:transcription cis-regulatory region binding"/>
    <property type="evidence" value="ECO:0007669"/>
    <property type="project" value="TreeGrafter"/>
</dbReference>
<dbReference type="GO" id="GO:0006355">
    <property type="term" value="P:regulation of DNA-templated transcription"/>
    <property type="evidence" value="ECO:0007669"/>
    <property type="project" value="InterPro"/>
</dbReference>
<dbReference type="CDD" id="cd17574">
    <property type="entry name" value="REC_OmpR"/>
    <property type="match status" value="1"/>
</dbReference>
<dbReference type="CDD" id="cd00383">
    <property type="entry name" value="trans_reg_C"/>
    <property type="match status" value="1"/>
</dbReference>
<dbReference type="FunFam" id="1.10.10.10:FF:000018">
    <property type="entry name" value="DNA-binding response regulator ResD"/>
    <property type="match status" value="1"/>
</dbReference>
<dbReference type="Gene3D" id="3.40.50.2300">
    <property type="match status" value="1"/>
</dbReference>
<dbReference type="Gene3D" id="6.10.250.690">
    <property type="match status" value="1"/>
</dbReference>
<dbReference type="Gene3D" id="1.10.10.10">
    <property type="entry name" value="Winged helix-like DNA-binding domain superfamily/Winged helix DNA-binding domain"/>
    <property type="match status" value="1"/>
</dbReference>
<dbReference type="InterPro" id="IPR011006">
    <property type="entry name" value="CheY-like_superfamily"/>
</dbReference>
<dbReference type="InterPro" id="IPR001867">
    <property type="entry name" value="OmpR/PhoB-type_DNA-bd"/>
</dbReference>
<dbReference type="InterPro" id="IPR001789">
    <property type="entry name" value="Sig_transdc_resp-reg_receiver"/>
</dbReference>
<dbReference type="InterPro" id="IPR039420">
    <property type="entry name" value="WalR-like"/>
</dbReference>
<dbReference type="InterPro" id="IPR036388">
    <property type="entry name" value="WH-like_DNA-bd_sf"/>
</dbReference>
<dbReference type="PANTHER" id="PTHR48111:SF49">
    <property type="entry name" value="HEME RESPONSE REGULATOR HSSR"/>
    <property type="match status" value="1"/>
</dbReference>
<dbReference type="PANTHER" id="PTHR48111">
    <property type="entry name" value="REGULATOR OF RPOS"/>
    <property type="match status" value="1"/>
</dbReference>
<dbReference type="Pfam" id="PF00072">
    <property type="entry name" value="Response_reg"/>
    <property type="match status" value="1"/>
</dbReference>
<dbReference type="Pfam" id="PF00486">
    <property type="entry name" value="Trans_reg_C"/>
    <property type="match status" value="1"/>
</dbReference>
<dbReference type="SMART" id="SM00448">
    <property type="entry name" value="REC"/>
    <property type="match status" value="1"/>
</dbReference>
<dbReference type="SMART" id="SM00862">
    <property type="entry name" value="Trans_reg_C"/>
    <property type="match status" value="1"/>
</dbReference>
<dbReference type="SUPFAM" id="SSF52172">
    <property type="entry name" value="CheY-like"/>
    <property type="match status" value="1"/>
</dbReference>
<dbReference type="PROSITE" id="PS51755">
    <property type="entry name" value="OMPR_PHOB"/>
    <property type="match status" value="1"/>
</dbReference>
<dbReference type="PROSITE" id="PS50110">
    <property type="entry name" value="RESPONSE_REGULATORY"/>
    <property type="match status" value="1"/>
</dbReference>
<feature type="chain" id="PRO_0000331331" description="Heme response regulator HssR">
    <location>
        <begin position="1"/>
        <end position="224"/>
    </location>
</feature>
<feature type="domain" description="Response regulatory" evidence="2">
    <location>
        <begin position="3"/>
        <end position="116"/>
    </location>
</feature>
<feature type="DNA-binding region" description="OmpR/PhoB-type" evidence="3">
    <location>
        <begin position="124"/>
        <end position="222"/>
    </location>
</feature>
<feature type="modified residue" description="4-aspartylphosphate" evidence="2">
    <location>
        <position position="52"/>
    </location>
</feature>
<name>HSSR_STAAT</name>
<proteinExistence type="inferred from homology"/>
<sequence>MVQCLVVDDDPRILNYIASHLQTEHIDAYTQPSGEAALKLLEKQRVDIAVVDIMMDGMDGFQLCNTLKNDYDIPVIMLTARDALSDKERAFISGTDDYVTKPFEVKELIFRIRAVLRRYNINSNSEMTIGNLTLNQSYLELQVSNKTMTLPNKEFQLLFMLAARPKQIFTREQIIEKIWGYDYEGDERTVDVHIKRLRQRLKKLNATLTIETVRGQGYKVENHV</sequence>
<gene>
    <name type="primary">hssR</name>
    <name type="ordered locus">USA300HOU_2344</name>
</gene>
<accession>A8Z552</accession>
<protein>
    <recommendedName>
        <fullName>Heme response regulator HssR</fullName>
    </recommendedName>
</protein>